<evidence type="ECO:0000255" key="1">
    <source>
        <dbReference type="HAMAP-Rule" id="MF_00113"/>
    </source>
</evidence>
<sequence>MKLSDFDYYLPEELIAQKPVEPRDASRLMVLNRKEKKIEHKIFRNIVEYLHEGDLLVRNVTKVIPARIYGRKETGAKIEVLLLEKISENVWEALVKPGSKVKKGTKIYFDDESYCVCLDWGDEGSRILEFNITEEELFKLGEAPLPPYVKNKVSFERYQTIYSRETGSVAAPTAGLHFTEDLLKKLEEKGVEFADLVLHVGLGTFRPVKVENITEHKMHSESYYVPNETVKKIFETKKNGGRIVAVGTTSVRTLETIVRLERKESYHGKTDIFIYPPFEFKLVDALITNFHLPKSTLLMLVSAFAGREFIMEAYNIAVKMKYRFFSFGNACFIY</sequence>
<accession>A6LJ38</accession>
<comment type="function">
    <text evidence="1">Transfers and isomerizes the ribose moiety from AdoMet to the 7-aminomethyl group of 7-deazaguanine (preQ1-tRNA) to give epoxyqueuosine (oQ-tRNA).</text>
</comment>
<comment type="catalytic activity">
    <reaction evidence="1">
        <text>7-aminomethyl-7-carbaguanosine(34) in tRNA + S-adenosyl-L-methionine = epoxyqueuosine(34) in tRNA + adenine + L-methionine + 2 H(+)</text>
        <dbReference type="Rhea" id="RHEA:32155"/>
        <dbReference type="Rhea" id="RHEA-COMP:10342"/>
        <dbReference type="Rhea" id="RHEA-COMP:18582"/>
        <dbReference type="ChEBI" id="CHEBI:15378"/>
        <dbReference type="ChEBI" id="CHEBI:16708"/>
        <dbReference type="ChEBI" id="CHEBI:57844"/>
        <dbReference type="ChEBI" id="CHEBI:59789"/>
        <dbReference type="ChEBI" id="CHEBI:82833"/>
        <dbReference type="ChEBI" id="CHEBI:194443"/>
        <dbReference type="EC" id="2.4.99.17"/>
    </reaction>
</comment>
<comment type="pathway">
    <text evidence="1">tRNA modification; tRNA-queuosine biosynthesis.</text>
</comment>
<comment type="subunit">
    <text evidence="1">Monomer.</text>
</comment>
<comment type="subcellular location">
    <subcellularLocation>
        <location evidence="1">Cytoplasm</location>
    </subcellularLocation>
</comment>
<comment type="similarity">
    <text evidence="1">Belongs to the QueA family.</text>
</comment>
<proteinExistence type="inferred from homology"/>
<feature type="chain" id="PRO_1000015303" description="S-adenosylmethionine:tRNA ribosyltransferase-isomerase">
    <location>
        <begin position="1"/>
        <end position="334"/>
    </location>
</feature>
<dbReference type="EC" id="2.4.99.17" evidence="1"/>
<dbReference type="EMBL" id="CP000716">
    <property type="protein sequence ID" value="ABR29939.1"/>
    <property type="molecule type" value="Genomic_DNA"/>
</dbReference>
<dbReference type="RefSeq" id="WP_012056301.1">
    <property type="nucleotide sequence ID" value="NC_009616.1"/>
</dbReference>
<dbReference type="SMR" id="A6LJ38"/>
<dbReference type="STRING" id="391009.Tmel_0060"/>
<dbReference type="KEGG" id="tme:Tmel_0060"/>
<dbReference type="eggNOG" id="COG0809">
    <property type="taxonomic scope" value="Bacteria"/>
</dbReference>
<dbReference type="HOGENOM" id="CLU_039110_1_0_0"/>
<dbReference type="OrthoDB" id="9805933at2"/>
<dbReference type="UniPathway" id="UPA00392"/>
<dbReference type="Proteomes" id="UP000001110">
    <property type="component" value="Chromosome"/>
</dbReference>
<dbReference type="GO" id="GO:0005737">
    <property type="term" value="C:cytoplasm"/>
    <property type="evidence" value="ECO:0007669"/>
    <property type="project" value="UniProtKB-SubCell"/>
</dbReference>
<dbReference type="GO" id="GO:0051075">
    <property type="term" value="F:S-adenosylmethionine:tRNA ribosyltransferase-isomerase activity"/>
    <property type="evidence" value="ECO:0007669"/>
    <property type="project" value="UniProtKB-EC"/>
</dbReference>
<dbReference type="GO" id="GO:0008616">
    <property type="term" value="P:queuosine biosynthetic process"/>
    <property type="evidence" value="ECO:0007669"/>
    <property type="project" value="UniProtKB-UniRule"/>
</dbReference>
<dbReference type="GO" id="GO:0002099">
    <property type="term" value="P:tRNA wobble guanine modification"/>
    <property type="evidence" value="ECO:0007669"/>
    <property type="project" value="TreeGrafter"/>
</dbReference>
<dbReference type="FunFam" id="2.40.10.240:FF:000002">
    <property type="entry name" value="S-adenosylmethionine:tRNA ribosyltransferase-isomerase"/>
    <property type="match status" value="1"/>
</dbReference>
<dbReference type="FunFam" id="3.40.1780.10:FF:000001">
    <property type="entry name" value="S-adenosylmethionine:tRNA ribosyltransferase-isomerase"/>
    <property type="match status" value="1"/>
</dbReference>
<dbReference type="Gene3D" id="2.40.10.240">
    <property type="entry name" value="QueA-like"/>
    <property type="match status" value="1"/>
</dbReference>
<dbReference type="Gene3D" id="3.40.1780.10">
    <property type="entry name" value="QueA-like"/>
    <property type="match status" value="1"/>
</dbReference>
<dbReference type="HAMAP" id="MF_00113">
    <property type="entry name" value="QueA"/>
    <property type="match status" value="1"/>
</dbReference>
<dbReference type="InterPro" id="IPR003699">
    <property type="entry name" value="QueA"/>
</dbReference>
<dbReference type="InterPro" id="IPR042118">
    <property type="entry name" value="QueA_dom1"/>
</dbReference>
<dbReference type="InterPro" id="IPR042119">
    <property type="entry name" value="QueA_dom2"/>
</dbReference>
<dbReference type="InterPro" id="IPR036100">
    <property type="entry name" value="QueA_sf"/>
</dbReference>
<dbReference type="NCBIfam" id="NF001140">
    <property type="entry name" value="PRK00147.1"/>
    <property type="match status" value="1"/>
</dbReference>
<dbReference type="NCBIfam" id="TIGR00113">
    <property type="entry name" value="queA"/>
    <property type="match status" value="1"/>
</dbReference>
<dbReference type="PANTHER" id="PTHR30307">
    <property type="entry name" value="S-ADENOSYLMETHIONINE:TRNA RIBOSYLTRANSFERASE-ISOMERASE"/>
    <property type="match status" value="1"/>
</dbReference>
<dbReference type="PANTHER" id="PTHR30307:SF0">
    <property type="entry name" value="S-ADENOSYLMETHIONINE:TRNA RIBOSYLTRANSFERASE-ISOMERASE"/>
    <property type="match status" value="1"/>
</dbReference>
<dbReference type="Pfam" id="PF02547">
    <property type="entry name" value="Queuosine_synth"/>
    <property type="match status" value="1"/>
</dbReference>
<dbReference type="SUPFAM" id="SSF111337">
    <property type="entry name" value="QueA-like"/>
    <property type="match status" value="1"/>
</dbReference>
<protein>
    <recommendedName>
        <fullName evidence="1">S-adenosylmethionine:tRNA ribosyltransferase-isomerase</fullName>
        <ecNumber evidence="1">2.4.99.17</ecNumber>
    </recommendedName>
    <alternativeName>
        <fullName evidence="1">Queuosine biosynthesis protein QueA</fullName>
    </alternativeName>
</protein>
<organism>
    <name type="scientific">Thermosipho melanesiensis (strain DSM 12029 / CIP 104789 / BI429)</name>
    <dbReference type="NCBI Taxonomy" id="391009"/>
    <lineage>
        <taxon>Bacteria</taxon>
        <taxon>Thermotogati</taxon>
        <taxon>Thermotogota</taxon>
        <taxon>Thermotogae</taxon>
        <taxon>Thermotogales</taxon>
        <taxon>Fervidobacteriaceae</taxon>
        <taxon>Thermosipho</taxon>
    </lineage>
</organism>
<gene>
    <name evidence="1" type="primary">queA</name>
    <name type="ordered locus">Tmel_0060</name>
</gene>
<reference key="1">
    <citation type="submission" date="2007-05" db="EMBL/GenBank/DDBJ databases">
        <title>Complete sequence of Thermosipho melanesiensis BI429.</title>
        <authorList>
            <consortium name="US DOE Joint Genome Institute"/>
            <person name="Copeland A."/>
            <person name="Lucas S."/>
            <person name="Lapidus A."/>
            <person name="Barry K."/>
            <person name="Glavina del Rio T."/>
            <person name="Dalin E."/>
            <person name="Tice H."/>
            <person name="Pitluck S."/>
            <person name="Chertkov O."/>
            <person name="Brettin T."/>
            <person name="Bruce D."/>
            <person name="Detter J.C."/>
            <person name="Han C."/>
            <person name="Schmutz J."/>
            <person name="Larimer F."/>
            <person name="Land M."/>
            <person name="Hauser L."/>
            <person name="Kyrpides N."/>
            <person name="Mikhailova N."/>
            <person name="Nelson K."/>
            <person name="Gogarten J.P."/>
            <person name="Noll K."/>
            <person name="Richardson P."/>
        </authorList>
    </citation>
    <scope>NUCLEOTIDE SEQUENCE [LARGE SCALE GENOMIC DNA]</scope>
    <source>
        <strain>DSM 12029 / CIP 104789 / BI429</strain>
    </source>
</reference>
<keyword id="KW-0963">Cytoplasm</keyword>
<keyword id="KW-0671">Queuosine biosynthesis</keyword>
<keyword id="KW-0949">S-adenosyl-L-methionine</keyword>
<keyword id="KW-0808">Transferase</keyword>
<name>QUEA_THEM4</name>